<feature type="chain" id="PRO_0000222359" description="Protein X">
    <location>
        <begin position="1"/>
        <end position="154"/>
    </location>
</feature>
<feature type="region of interest" description="Mitochondrial targeting sequence" evidence="1">
    <location>
        <begin position="68"/>
        <end position="117"/>
    </location>
</feature>
<feature type="sequence variant" description="In expression vector pCMVX.">
    <original>S</original>
    <variation>A</variation>
    <location>
        <position position="12"/>
    </location>
</feature>
<feature type="sequence variant" description="In expression vector pCMVX.">
    <original>E</original>
    <variation>A</variation>
    <location>
        <position position="109"/>
    </location>
</feature>
<proteinExistence type="evidence at protein level"/>
<evidence type="ECO:0000255" key="1">
    <source>
        <dbReference type="HAMAP-Rule" id="MF_04074"/>
    </source>
</evidence>
<evidence type="ECO:0000269" key="2">
    <source>
    </source>
</evidence>
<evidence type="ECO:0000269" key="3">
    <source>
    </source>
</evidence>
<evidence type="ECO:0000269" key="4">
    <source>
    </source>
</evidence>
<evidence type="ECO:0000269" key="5">
    <source>
    </source>
</evidence>
<evidence type="ECO:0000269" key="6">
    <source>
    </source>
</evidence>
<evidence type="ECO:0000269" key="7">
    <source>
    </source>
</evidence>
<evidence type="ECO:0000269" key="8">
    <source>
    </source>
</evidence>
<organism>
    <name type="scientific">Hepatitis B virus genotype A2 subtype adw2 (strain Rutter 1979)</name>
    <name type="common">HBV-A</name>
    <dbReference type="NCBI Taxonomy" id="480116"/>
    <lineage>
        <taxon>Viruses</taxon>
        <taxon>Riboviria</taxon>
        <taxon>Pararnavirae</taxon>
        <taxon>Artverviricota</taxon>
        <taxon>Revtraviricetes</taxon>
        <taxon>Blubervirales</taxon>
        <taxon>Hepadnaviridae</taxon>
        <taxon>Orthohepadnavirus</taxon>
        <taxon>Hepatitis B virus</taxon>
    </lineage>
</organism>
<accession>P69713</accession>
<accession>P03166</accession>
<accession>P12935</accession>
<keyword id="KW-1074">Activation of host NF-kappa-B by virus</keyword>
<keyword id="KW-0010">Activator</keyword>
<keyword id="KW-0053">Apoptosis</keyword>
<keyword id="KW-1035">Host cytoplasm</keyword>
<keyword id="KW-1079">Host G2/M cell cycle arrest by virus</keyword>
<keyword id="KW-1045">Host mitochondrion</keyword>
<keyword id="KW-1048">Host nucleus</keyword>
<keyword id="KW-0945">Host-virus interaction</keyword>
<keyword id="KW-1121">Modulation of host cell cycle by virus</keyword>
<keyword id="KW-0804">Transcription</keyword>
<keyword id="KW-0805">Transcription regulation</keyword>
<sequence>MAARLYCQLDPSRDVLCLRPVGAESRGRPLSGPLGTLSSPSPSAVPADHGAHLSLRGLPVCAFSSAGPCALRFTSARCMETTVNAHQILPKVLHKRTLGLPAMSTTDLEAYFKDCVFKDWEELGEEIRLKVFVLGGCRHKLVCAPAPCNFFTSA</sequence>
<organismHost>
    <name type="scientific">Homo sapiens</name>
    <name type="common">Human</name>
    <dbReference type="NCBI Taxonomy" id="9606"/>
</organismHost>
<organismHost>
    <name type="scientific">Pan troglodytes</name>
    <name type="common">Chimpanzee</name>
    <dbReference type="NCBI Taxonomy" id="9598"/>
</organismHost>
<comment type="function">
    <text evidence="1 2 5">Multifunctional protein that plays a role in silencing host antiviral defenses and promoting viral transcription. Does not seem to be essential for HBV infection. May be directly involved in development of cirrhosis and liver cancer (hepatocellular carcinoma). Most of cytosolic activities involve modulation of cytosolic calcium. The effect on apoptosis is controversial depending on the cell types in which the studies have been conducted. May induce apoptosis by localizing in mitochondria and causing loss of mitochondrial membrane potential. May also modulate apoptosis by binding host CFLAR, a key regulator of the death-inducing signaling complex (DISC). Promotes viral transcription by using the host E3 ubiquitin ligase DDB1 to target the SMC5-SMC6 complex to proteasomal degradation. This host complex would otherwise bind to viral episomal DNA, and prevents its transcription. Moderately stimulates transcription of many different viral and cellular transcription elements. Promoters and enhancers stimulated by HBx contain DNA binding sites for NF-kappa-B, AP-1, AP-2, c-EBP, ATF/CREB, or the calcium-activated factor NF-AT.</text>
</comment>
<comment type="subunit">
    <text evidence="1">May form homodimer. May interact with host CEBPA, CFLAR, CREB1, DDB1, E4F1, HBXIP, HSPD1/HSP60, NFKBIA, POLR2E and SMAD4. Interacts with host SMC5-SMC6 complex and induces its degradation. Interacts with host TRPC4AP; leading to prevent ubiquitination of TRPC4AP. Interacts with host PLSCR1; this interaction promotes ubiquitination and degradation of HBx and impairs HBx-mediated cell proliferation.</text>
</comment>
<comment type="interaction">
    <interactant intactId="EBI-7088789">
        <id>P69713</id>
    </interactant>
    <interactant intactId="EBI-747107">
        <id>Q8IUQ4</id>
        <label>SIAH1</label>
    </interactant>
    <organismsDiffer>true</organismsDiffer>
    <experiments>4</experiments>
</comment>
<comment type="subcellular location">
    <subcellularLocation>
        <location evidence="1 4 7 8">Host cytoplasm</location>
    </subcellularLocation>
    <subcellularLocation>
        <location evidence="1 4 7 8">Host nucleus</location>
    </subcellularLocation>
    <subcellularLocation>
        <location evidence="1 3">Host mitochondrion</location>
    </subcellularLocation>
    <text evidence="1 3 8">Mainly cytoplasmic as only a fraction is detected in the nucleus. In cytoplasm, a minor fraction associates with mitochondria or proteasomes.</text>
</comment>
<comment type="PTM">
    <text evidence="1 6">A fraction may be phosphorylated in insect cells and HepG2 cells, a human hepatoblastoma cell line. Phosphorylated in vitro by host protein kinase C or mitogen-activated protein kinase. N-acetylated in insect cells.</text>
</comment>
<comment type="similarity">
    <text evidence="1">Belongs to the orthohepadnavirus protein X family.</text>
</comment>
<comment type="caution">
    <text>Transcriptional activities should be taken with a grain of salt. As of 2007, all studies demonstrating in vivo interaction between protein X and transcriptional components were performed with significant overexpression of both proteins and in the absence of viral infection.</text>
</comment>
<name>X_HBVA3</name>
<protein>
    <recommendedName>
        <fullName evidence="1">Protein X</fullName>
    </recommendedName>
    <alternativeName>
        <fullName evidence="1">HBx</fullName>
    </alternativeName>
    <alternativeName>
        <fullName evidence="1">Peptide X</fullName>
    </alternativeName>
    <alternativeName>
        <fullName evidence="1">pX</fullName>
    </alternativeName>
</protein>
<dbReference type="EMBL" id="X02763">
    <property type="protein sequence ID" value="CAA26540.1"/>
    <property type="molecule type" value="Genomic_DNA"/>
</dbReference>
<dbReference type="PIR" id="A31289">
    <property type="entry name" value="QQVLAW"/>
</dbReference>
<dbReference type="PIR" id="S47408">
    <property type="entry name" value="S47408"/>
</dbReference>
<dbReference type="SMR" id="P69713"/>
<dbReference type="IntAct" id="P69713">
    <property type="interactions" value="4"/>
</dbReference>
<dbReference type="MINT" id="P69713"/>
<dbReference type="Proteomes" id="UP000008766">
    <property type="component" value="Segment"/>
</dbReference>
<dbReference type="GO" id="GO:0033650">
    <property type="term" value="C:host cell mitochondrion"/>
    <property type="evidence" value="ECO:0007669"/>
    <property type="project" value="UniProtKB-SubCell"/>
</dbReference>
<dbReference type="GO" id="GO:0042025">
    <property type="term" value="C:host cell nucleus"/>
    <property type="evidence" value="ECO:0007669"/>
    <property type="project" value="UniProtKB-SubCell"/>
</dbReference>
<dbReference type="GO" id="GO:0006351">
    <property type="term" value="P:DNA-templated transcription"/>
    <property type="evidence" value="ECO:0007669"/>
    <property type="project" value="UniProtKB-UniRule"/>
</dbReference>
<dbReference type="GO" id="GO:0085033">
    <property type="term" value="P:symbiont-mediated activation of host NF-kappaB cascade"/>
    <property type="evidence" value="ECO:0007669"/>
    <property type="project" value="UniProtKB-UniRule"/>
</dbReference>
<dbReference type="GO" id="GO:0039592">
    <property type="term" value="P:symbiont-mediated arrest of host cell cycle during G2/M transition"/>
    <property type="evidence" value="ECO:0007669"/>
    <property type="project" value="UniProtKB-UniRule"/>
</dbReference>
<dbReference type="GO" id="GO:0019079">
    <property type="term" value="P:viral genome replication"/>
    <property type="evidence" value="ECO:0007669"/>
    <property type="project" value="UniProtKB-UniRule"/>
</dbReference>
<dbReference type="HAMAP" id="MF_04074">
    <property type="entry name" value="HBV_X"/>
    <property type="match status" value="1"/>
</dbReference>
<dbReference type="InterPro" id="IPR000236">
    <property type="entry name" value="Transactivation_prot_X"/>
</dbReference>
<dbReference type="Pfam" id="PF00739">
    <property type="entry name" value="X"/>
    <property type="match status" value="1"/>
</dbReference>
<reference key="1">
    <citation type="book" date="1980" name="Animal virus genetics">
        <title>The nucleotide sequence of the hepatitis B viral genome and the identification of the major viral genes.</title>
        <editorList>
            <person name="Field B.N."/>
            <person name="Jaenisch R."/>
            <person name="Fox C.F."/>
        </editorList>
        <authorList>
            <person name="Valenzuela P."/>
            <person name="Quiroga M."/>
            <person name="Zaldivar J."/>
            <person name="Gray P."/>
            <person name="Rutter W.J."/>
        </authorList>
    </citation>
    <scope>NUCLEOTIDE SEQUENCE [GENOMIC DNA]</scope>
</reference>
<reference key="2">
    <citation type="journal article" date="1990" name="Oncogene">
        <title>The identification of hepatitis B virus X gene responsive elements reveals functional similarity of X and HTLV-I tax.</title>
        <authorList>
            <person name="Faktor O."/>
            <person name="Shaul Y."/>
        </authorList>
    </citation>
    <scope>PROMOTER STIMULATION</scope>
</reference>
<reference key="3">
    <citation type="journal article" date="1991" name="Oncogene">
        <title>Phosphorylation and rapid turnover of hepatitis B virus X-protein expressed in HepG2 cells from a recombinant vaccinia virus.</title>
        <authorList>
            <person name="Schek N."/>
            <person name="Bartenschlager R."/>
            <person name="Kuhn C."/>
            <person name="Schaller H."/>
        </authorList>
    </citation>
    <scope>PHOSPHORYLATION IN HEPG2 CELLS</scope>
</reference>
<reference key="4">
    <citation type="journal article" date="1991" name="Science">
        <title>HBV X protein alters the DNA binding specificity of CREB and ATF-2 by protein-protein interactions.</title>
        <authorList>
            <person name="Maguire H.F."/>
            <person name="Hoeffler J.P."/>
            <person name="Siddiqui A."/>
        </authorList>
    </citation>
    <scope>INTERACTION WITH HUMAN CREB1</scope>
</reference>
<reference key="5">
    <citation type="journal article" date="1995" name="EMBO J.">
        <title>The hepatitis B virus HBx protein is a dual specificity cytoplasmic activator of Ras and nuclear activator of transcription factors.</title>
        <authorList>
            <person name="Doria M."/>
            <person name="Klein N."/>
            <person name="Lucito R."/>
            <person name="Schneider R.J."/>
        </authorList>
    </citation>
    <scope>SUBCELLULAR LOCATION</scope>
</reference>
<reference key="6">
    <citation type="journal article" date="1997" name="Hepatology">
        <title>Isolation and molecular characterization of hepatitis B virus X-protein from a baculovirus expression system.</title>
        <authorList>
            <person name="Urban S."/>
            <person name="Hildt E."/>
            <person name="Eckerskorn C."/>
            <person name="Sirma H."/>
            <person name="Kekule A."/>
            <person name="Hofschneider P.H."/>
        </authorList>
    </citation>
    <scope>IDENTIFICATION BY MASS SPECTROMETRY</scope>
</reference>
<reference key="7">
    <citation type="journal article" date="1998" name="Mol. Cell. Biol.">
        <title>Hepatitis B virus pX targets TFIIB in transcription coactivation.</title>
        <authorList>
            <person name="Haviv I."/>
            <person name="Shamay M."/>
            <person name="Doitsh G."/>
            <person name="Shaul Y."/>
        </authorList>
    </citation>
    <scope>INTERACTION WITH HUMAN CELL TRANSCRIPTION MACHINERY</scope>
</reference>
<reference key="8">
    <citation type="journal article" date="1998" name="Oncogene">
        <title>Cytosol is the prime compartment of hepatitis B virus X protein where it colocalizes with the proteasome.</title>
        <authorList>
            <person name="Sirma H."/>
            <person name="Weil R."/>
            <person name="Rosmorduc O."/>
            <person name="Urban S."/>
            <person name="Israel A."/>
            <person name="Kremsdorf D."/>
            <person name="Brechot C."/>
        </authorList>
    </citation>
    <scope>SUBCELLULAR LOCATION</scope>
</reference>
<reference key="9">
    <citation type="journal article" date="1999" name="Oncogene">
        <title>Association of hepatitis B virus X protein with mitochondria causes mitochondrial aggregation at the nuclear periphery, leading to cell death.</title>
        <authorList>
            <person name="Takada S."/>
            <person name="Shirakata Y."/>
            <person name="Kaneniwa N."/>
            <person name="Koike K."/>
        </authorList>
    </citation>
    <scope>FUNCTION</scope>
</reference>
<reference key="10">
    <citation type="journal article" date="1999" name="J. Biol. Chem.">
        <title>Interaction of hepatitis B viral X protein and CCAAT/enhancer-binding protein alpha synergistically activates the hepatitis B viral enhancer II/pregenomic promoter.</title>
        <authorList>
            <person name="Choi B.H."/>
            <person name="Park G.T."/>
            <person name="Rho H.M."/>
        </authorList>
    </citation>
    <scope>INTERACTION WITH HUMAN CEBPA</scope>
</reference>
<reference key="11">
    <citation type="journal article" date="1999" name="Mol. Cell. Biol.">
        <title>Direct association and nuclear import of the hepatitis B virus X protein with the NF-kappaB inhibitor IkappaBalpha.</title>
        <authorList>
            <person name="Weil R."/>
            <person name="Sirma H."/>
            <person name="Giannini C."/>
            <person name="Kremsdorf D."/>
            <person name="Bessia C."/>
            <person name="Dargemont C."/>
            <person name="Brechot C."/>
            <person name="Israel A."/>
        </authorList>
    </citation>
    <scope>INTERACTION WITH HUMAN NFKBIA</scope>
</reference>
<reference key="12">
    <citation type="journal article" date="2001" name="J. Gen. Virol.">
        <title>Intracellular localization of the hepatitis B virus HBx protein.</title>
        <authorList>
            <person name="Henkler F."/>
            <person name="Hoare J."/>
            <person name="Waseem N."/>
            <person name="Goldin R.D."/>
            <person name="McGarvey M.J."/>
            <person name="Koshy R."/>
            <person name="King I.A."/>
        </authorList>
    </citation>
    <scope>SUBCELLULAR LOCATION</scope>
</reference>
<reference key="13">
    <citation type="journal article" date="2001" name="J. Med. Virol.">
        <title>Subcellular localisation of the X protein in HBV infected hepatocytes.</title>
        <authorList>
            <person name="Hoare J."/>
            <person name="Henkler F."/>
            <person name="Dowling J.J."/>
            <person name="Errington W."/>
            <person name="Goldin R.D."/>
            <person name="Fish D."/>
            <person name="McGarvey M.J."/>
        </authorList>
    </citation>
    <scope>SUBCELLULAR LOCATION</scope>
</reference>
<reference key="14">
    <citation type="journal article" date="2003" name="J. Biol. Chem.">
        <title>Hepatitis B virus X protein induces cell death by causing loss of mitochondrial membrane potential.</title>
        <authorList>
            <person name="Shirakata Y."/>
            <person name="Koike K."/>
        </authorList>
    </citation>
    <scope>FUNCTION IN APOPTOSIS</scope>
</reference>
<reference key="15">
    <citation type="journal article" date="2004" name="Biochem. Biophys. Res. Commun.">
        <title>Interaction of the hepatitis B virus X protein (HBx) with heat shock protein 60 enhances HBx-mediated apoptosis.</title>
        <authorList>
            <person name="Tanaka Y."/>
            <person name="Kanai F."/>
            <person name="Kawakami T."/>
            <person name="Tateishi K."/>
            <person name="Ijichi H."/>
            <person name="Kawabe T."/>
            <person name="Arakawa Y."/>
            <person name="Kawakami T."/>
            <person name="Nishimura T."/>
            <person name="Shirakata Y."/>
            <person name="Koike K."/>
            <person name="Omata M."/>
        </authorList>
    </citation>
    <scope>INTERACTION WITH HUMAN HSPD1/HSP60</scope>
</reference>
<reference key="16">
    <citation type="journal article" date="2004" name="J. Virol.">
        <title>The enigmatic X gene of hepatitis B virus.</title>
        <authorList>
            <person name="Bouchard M.J."/>
            <person name="Schneider R.J."/>
        </authorList>
    </citation>
    <scope>REVIEW</scope>
</reference>
<reference key="17">
    <citation type="journal article" date="2006" name="Cancer Sci.">
        <title>Molecular functions and biological roles of hepatitis B virus x protein.</title>
        <authorList>
            <person name="Tang H."/>
            <person name="Oishi N."/>
            <person name="Kaneko S."/>
            <person name="Murakami S."/>
        </authorList>
    </citation>
    <scope>REVIEW</scope>
</reference>
<gene>
    <name evidence="1" type="primary">X</name>
</gene>